<comment type="function">
    <text evidence="1">One of the primary rRNA binding proteins, it binds directly to 16S rRNA where it helps nucleate assembly of the platform of the 30S subunit by binding and bridging several RNA helices of the 16S rRNA.</text>
</comment>
<comment type="function">
    <text evidence="1">Forms an intersubunit bridge (bridge B4) with the 23S rRNA of the 50S subunit in the ribosome.</text>
</comment>
<comment type="subunit">
    <text evidence="1">Part of the 30S ribosomal subunit. Forms a bridge to the 50S subunit in the 70S ribosome, contacting the 23S rRNA.</text>
</comment>
<comment type="similarity">
    <text evidence="1">Belongs to the universal ribosomal protein uS15 family.</text>
</comment>
<dbReference type="EMBL" id="CP000854">
    <property type="protein sequence ID" value="ACC40371.1"/>
    <property type="molecule type" value="Genomic_DNA"/>
</dbReference>
<dbReference type="RefSeq" id="WP_011740180.1">
    <property type="nucleotide sequence ID" value="NC_010612.1"/>
</dbReference>
<dbReference type="SMR" id="B2HKV0"/>
<dbReference type="STRING" id="216594.MMAR_1922"/>
<dbReference type="GeneID" id="34343451"/>
<dbReference type="GeneID" id="93437839"/>
<dbReference type="KEGG" id="mmi:MMAR_1922"/>
<dbReference type="eggNOG" id="COG0184">
    <property type="taxonomic scope" value="Bacteria"/>
</dbReference>
<dbReference type="HOGENOM" id="CLU_148518_0_0_11"/>
<dbReference type="OrthoDB" id="9799262at2"/>
<dbReference type="Proteomes" id="UP000001190">
    <property type="component" value="Chromosome"/>
</dbReference>
<dbReference type="GO" id="GO:0022627">
    <property type="term" value="C:cytosolic small ribosomal subunit"/>
    <property type="evidence" value="ECO:0007669"/>
    <property type="project" value="TreeGrafter"/>
</dbReference>
<dbReference type="GO" id="GO:0019843">
    <property type="term" value="F:rRNA binding"/>
    <property type="evidence" value="ECO:0007669"/>
    <property type="project" value="UniProtKB-UniRule"/>
</dbReference>
<dbReference type="GO" id="GO:0003735">
    <property type="term" value="F:structural constituent of ribosome"/>
    <property type="evidence" value="ECO:0007669"/>
    <property type="project" value="InterPro"/>
</dbReference>
<dbReference type="GO" id="GO:0006412">
    <property type="term" value="P:translation"/>
    <property type="evidence" value="ECO:0007669"/>
    <property type="project" value="UniProtKB-UniRule"/>
</dbReference>
<dbReference type="CDD" id="cd00353">
    <property type="entry name" value="Ribosomal_S15p_S13e"/>
    <property type="match status" value="1"/>
</dbReference>
<dbReference type="FunFam" id="1.10.287.10:FF:000002">
    <property type="entry name" value="30S ribosomal protein S15"/>
    <property type="match status" value="1"/>
</dbReference>
<dbReference type="Gene3D" id="6.10.250.3130">
    <property type="match status" value="1"/>
</dbReference>
<dbReference type="Gene3D" id="1.10.287.10">
    <property type="entry name" value="S15/NS1, RNA-binding"/>
    <property type="match status" value="1"/>
</dbReference>
<dbReference type="HAMAP" id="MF_01343_B">
    <property type="entry name" value="Ribosomal_uS15_B"/>
    <property type="match status" value="1"/>
</dbReference>
<dbReference type="InterPro" id="IPR000589">
    <property type="entry name" value="Ribosomal_uS15"/>
</dbReference>
<dbReference type="InterPro" id="IPR005290">
    <property type="entry name" value="Ribosomal_uS15_bac-type"/>
</dbReference>
<dbReference type="InterPro" id="IPR009068">
    <property type="entry name" value="uS15_NS1_RNA-bd_sf"/>
</dbReference>
<dbReference type="NCBIfam" id="TIGR00952">
    <property type="entry name" value="S15_bact"/>
    <property type="match status" value="1"/>
</dbReference>
<dbReference type="PANTHER" id="PTHR23321">
    <property type="entry name" value="RIBOSOMAL PROTEIN S15, BACTERIAL AND ORGANELLAR"/>
    <property type="match status" value="1"/>
</dbReference>
<dbReference type="PANTHER" id="PTHR23321:SF26">
    <property type="entry name" value="SMALL RIBOSOMAL SUBUNIT PROTEIN US15M"/>
    <property type="match status" value="1"/>
</dbReference>
<dbReference type="Pfam" id="PF00312">
    <property type="entry name" value="Ribosomal_S15"/>
    <property type="match status" value="1"/>
</dbReference>
<dbReference type="SMART" id="SM01387">
    <property type="entry name" value="Ribosomal_S15"/>
    <property type="match status" value="1"/>
</dbReference>
<dbReference type="SUPFAM" id="SSF47060">
    <property type="entry name" value="S15/NS1 RNA-binding domain"/>
    <property type="match status" value="1"/>
</dbReference>
<dbReference type="PROSITE" id="PS00362">
    <property type="entry name" value="RIBOSOMAL_S15"/>
    <property type="match status" value="1"/>
</dbReference>
<organism>
    <name type="scientific">Mycobacterium marinum (strain ATCC BAA-535 / M)</name>
    <dbReference type="NCBI Taxonomy" id="216594"/>
    <lineage>
        <taxon>Bacteria</taxon>
        <taxon>Bacillati</taxon>
        <taxon>Actinomycetota</taxon>
        <taxon>Actinomycetes</taxon>
        <taxon>Mycobacteriales</taxon>
        <taxon>Mycobacteriaceae</taxon>
        <taxon>Mycobacterium</taxon>
        <taxon>Mycobacterium ulcerans group</taxon>
    </lineage>
</organism>
<keyword id="KW-1185">Reference proteome</keyword>
<keyword id="KW-0687">Ribonucleoprotein</keyword>
<keyword id="KW-0689">Ribosomal protein</keyword>
<keyword id="KW-0694">RNA-binding</keyword>
<keyword id="KW-0699">rRNA-binding</keyword>
<reference key="1">
    <citation type="journal article" date="2008" name="Genome Res.">
        <title>Insights from the complete genome sequence of Mycobacterium marinum on the evolution of Mycobacterium tuberculosis.</title>
        <authorList>
            <person name="Stinear T.P."/>
            <person name="Seemann T."/>
            <person name="Harrison P.F."/>
            <person name="Jenkin G.A."/>
            <person name="Davies J.K."/>
            <person name="Johnson P.D."/>
            <person name="Abdellah Z."/>
            <person name="Arrowsmith C."/>
            <person name="Chillingworth T."/>
            <person name="Churcher C."/>
            <person name="Clarke K."/>
            <person name="Cronin A."/>
            <person name="Davis P."/>
            <person name="Goodhead I."/>
            <person name="Holroyd N."/>
            <person name="Jagels K."/>
            <person name="Lord A."/>
            <person name="Moule S."/>
            <person name="Mungall K."/>
            <person name="Norbertczak H."/>
            <person name="Quail M.A."/>
            <person name="Rabbinowitsch E."/>
            <person name="Walker D."/>
            <person name="White B."/>
            <person name="Whitehead S."/>
            <person name="Small P.L."/>
            <person name="Brosch R."/>
            <person name="Ramakrishnan L."/>
            <person name="Fischbach M.A."/>
            <person name="Parkhill J."/>
            <person name="Cole S.T."/>
        </authorList>
    </citation>
    <scope>NUCLEOTIDE SEQUENCE [LARGE SCALE GENOMIC DNA]</scope>
    <source>
        <strain>ATCC BAA-535 / M</strain>
    </source>
</reference>
<protein>
    <recommendedName>
        <fullName evidence="1">Small ribosomal subunit protein uS15</fullName>
    </recommendedName>
    <alternativeName>
        <fullName evidence="2">30S ribosomal protein S15</fullName>
    </alternativeName>
</protein>
<accession>B2HKV0</accession>
<proteinExistence type="inferred from homology"/>
<sequence>MALTAEQKKEILNSYGLHETDTGSPEAQIALLTKRISDLTEHLKVHKHDHHSRRGLLLLVGRRRRLIKYISQIDVQRYRSLIERLGLRR</sequence>
<evidence type="ECO:0000255" key="1">
    <source>
        <dbReference type="HAMAP-Rule" id="MF_01343"/>
    </source>
</evidence>
<evidence type="ECO:0000305" key="2"/>
<feature type="chain" id="PRO_1000143143" description="Small ribosomal subunit protein uS15">
    <location>
        <begin position="1"/>
        <end position="89"/>
    </location>
</feature>
<name>RS15_MYCMM</name>
<gene>
    <name evidence="1" type="primary">rpsO</name>
    <name type="ordered locus">MMAR_1922</name>
</gene>